<evidence type="ECO:0000250" key="1"/>
<evidence type="ECO:0000255" key="2"/>
<evidence type="ECO:0000255" key="3">
    <source>
        <dbReference type="PROSITE-ProRule" id="PRU00116"/>
    </source>
</evidence>
<evidence type="ECO:0000255" key="4">
    <source>
        <dbReference type="PROSITE-ProRule" id="PRU00782"/>
    </source>
</evidence>
<evidence type="ECO:0000255" key="5">
    <source>
        <dbReference type="PROSITE-ProRule" id="PRU01190"/>
    </source>
</evidence>
<evidence type="ECO:0000256" key="6">
    <source>
        <dbReference type="SAM" id="MobiDB-lite"/>
    </source>
</evidence>
<evidence type="ECO:0000305" key="7"/>
<dbReference type="EMBL" id="Y00624">
    <property type="protein sequence ID" value="CAA68663.1"/>
    <property type="molecule type" value="Genomic_DNA"/>
</dbReference>
<dbReference type="PIR" id="A27224">
    <property type="entry name" value="A27224"/>
</dbReference>
<dbReference type="SMR" id="P05659"/>
<dbReference type="BindingDB" id="P05659"/>
<dbReference type="ChEMBL" id="CHEMBL4295699"/>
<dbReference type="VEuPathDB" id="AmoebaDB:ACA1_326740"/>
<dbReference type="BRENDA" id="5.6.1.8">
    <property type="organism ID" value="15"/>
</dbReference>
<dbReference type="GO" id="GO:0005737">
    <property type="term" value="C:cytoplasm"/>
    <property type="evidence" value="ECO:0007669"/>
    <property type="project" value="TreeGrafter"/>
</dbReference>
<dbReference type="GO" id="GO:0016020">
    <property type="term" value="C:membrane"/>
    <property type="evidence" value="ECO:0007669"/>
    <property type="project" value="TreeGrafter"/>
</dbReference>
<dbReference type="GO" id="GO:0016459">
    <property type="term" value="C:myosin complex"/>
    <property type="evidence" value="ECO:0007669"/>
    <property type="project" value="UniProtKB-KW"/>
</dbReference>
<dbReference type="GO" id="GO:0051015">
    <property type="term" value="F:actin filament binding"/>
    <property type="evidence" value="ECO:0007669"/>
    <property type="project" value="TreeGrafter"/>
</dbReference>
<dbReference type="GO" id="GO:0005524">
    <property type="term" value="F:ATP binding"/>
    <property type="evidence" value="ECO:0007669"/>
    <property type="project" value="UniProtKB-KW"/>
</dbReference>
<dbReference type="GO" id="GO:0005516">
    <property type="term" value="F:calmodulin binding"/>
    <property type="evidence" value="ECO:0007669"/>
    <property type="project" value="UniProtKB-KW"/>
</dbReference>
<dbReference type="GO" id="GO:0000146">
    <property type="term" value="F:microfilament motor activity"/>
    <property type="evidence" value="ECO:0007669"/>
    <property type="project" value="TreeGrafter"/>
</dbReference>
<dbReference type="GO" id="GO:0007015">
    <property type="term" value="P:actin filament organization"/>
    <property type="evidence" value="ECO:0007669"/>
    <property type="project" value="TreeGrafter"/>
</dbReference>
<dbReference type="CDD" id="cd01377">
    <property type="entry name" value="MYSc_class_II"/>
    <property type="match status" value="1"/>
</dbReference>
<dbReference type="FunFam" id="1.10.10.820:FF:000001">
    <property type="entry name" value="Myosin heavy chain"/>
    <property type="match status" value="1"/>
</dbReference>
<dbReference type="FunFam" id="3.40.850.10:FF:000101">
    <property type="entry name" value="Slow myosin heavy chain 2"/>
    <property type="match status" value="1"/>
</dbReference>
<dbReference type="Gene3D" id="1.10.10.820">
    <property type="match status" value="1"/>
</dbReference>
<dbReference type="Gene3D" id="1.10.287.1490">
    <property type="match status" value="1"/>
</dbReference>
<dbReference type="Gene3D" id="1.20.5.340">
    <property type="match status" value="1"/>
</dbReference>
<dbReference type="Gene3D" id="1.20.58.530">
    <property type="match status" value="1"/>
</dbReference>
<dbReference type="Gene3D" id="3.30.70.1590">
    <property type="match status" value="1"/>
</dbReference>
<dbReference type="Gene3D" id="3.40.850.10">
    <property type="entry name" value="Kinesin motor domain"/>
    <property type="match status" value="1"/>
</dbReference>
<dbReference type="Gene3D" id="1.20.120.720">
    <property type="entry name" value="Myosin VI head, motor domain, U50 subdomain"/>
    <property type="match status" value="1"/>
</dbReference>
<dbReference type="Gene3D" id="4.10.270.10">
    <property type="entry name" value="Myosin, subunit A"/>
    <property type="match status" value="1"/>
</dbReference>
<dbReference type="InterPro" id="IPR000048">
    <property type="entry name" value="IQ_motif_EF-hand-BS"/>
</dbReference>
<dbReference type="InterPro" id="IPR036961">
    <property type="entry name" value="Kinesin_motor_dom_sf"/>
</dbReference>
<dbReference type="InterPro" id="IPR001609">
    <property type="entry name" value="Myosin_head_motor_dom-like"/>
</dbReference>
<dbReference type="InterPro" id="IPR004009">
    <property type="entry name" value="Myosin_N"/>
</dbReference>
<dbReference type="InterPro" id="IPR027417">
    <property type="entry name" value="P-loop_NTPase"/>
</dbReference>
<dbReference type="PANTHER" id="PTHR13140">
    <property type="entry name" value="MYOSIN"/>
    <property type="match status" value="1"/>
</dbReference>
<dbReference type="PANTHER" id="PTHR13140:SF857">
    <property type="entry name" value="MYOSIN-11"/>
    <property type="match status" value="1"/>
</dbReference>
<dbReference type="Pfam" id="PF00063">
    <property type="entry name" value="Myosin_head"/>
    <property type="match status" value="1"/>
</dbReference>
<dbReference type="PRINTS" id="PR00193">
    <property type="entry name" value="MYOSINHEAVY"/>
</dbReference>
<dbReference type="SMART" id="SM00015">
    <property type="entry name" value="IQ"/>
    <property type="match status" value="2"/>
</dbReference>
<dbReference type="SMART" id="SM00242">
    <property type="entry name" value="MYSc"/>
    <property type="match status" value="1"/>
</dbReference>
<dbReference type="SUPFAM" id="SSF90257">
    <property type="entry name" value="Myosin rod fragments"/>
    <property type="match status" value="1"/>
</dbReference>
<dbReference type="SUPFAM" id="SSF52540">
    <property type="entry name" value="P-loop containing nucleoside triphosphate hydrolases"/>
    <property type="match status" value="1"/>
</dbReference>
<dbReference type="SUPFAM" id="SSF57997">
    <property type="entry name" value="Tropomyosin"/>
    <property type="match status" value="1"/>
</dbReference>
<dbReference type="PROSITE" id="PS50096">
    <property type="entry name" value="IQ"/>
    <property type="match status" value="1"/>
</dbReference>
<dbReference type="PROSITE" id="PS51456">
    <property type="entry name" value="MYOSIN_MOTOR"/>
    <property type="match status" value="1"/>
</dbReference>
<dbReference type="PROSITE" id="PS51844">
    <property type="entry name" value="SH3_LIKE"/>
    <property type="match status" value="1"/>
</dbReference>
<comment type="function">
    <text>Myosin is a protein that binds to F-actin and has ATPase activity that is activated by F-actin.</text>
</comment>
<comment type="subunit">
    <text>Myosin II heavy chain is two-headed. It self-assembles into filaments. Hexamer of 2 heavy chain subunits (MHC), 2 alkali light chain subunits (MLC) and 2 regulatory light chain subunits (MLC-2).</text>
</comment>
<comment type="domain">
    <text>The rodlike tail sequence is highly repetitive, showing cycles of a 28-residue repeat pattern composed of 4 heptapeptides, characteristic of alpha-helical structures. This region is interrupted by a hinge and joined by a nonhelical tailpiece where the regulatory phosphorylation sites reside.</text>
</comment>
<comment type="miscellaneous">
    <text>The hinge region may play a key role in mediating the effect of heavy chain phosphorylation on enzymatic activity.</text>
</comment>
<comment type="similarity">
    <text evidence="7">Belongs to the TRAFAC class myosin-kinesin ATPase superfamily. Myosin family.</text>
</comment>
<name>MYSN_ACACA</name>
<organism>
    <name type="scientific">Acanthamoeba castellanii</name>
    <name type="common">Amoeba</name>
    <dbReference type="NCBI Taxonomy" id="5755"/>
    <lineage>
        <taxon>Eukaryota</taxon>
        <taxon>Amoebozoa</taxon>
        <taxon>Discosea</taxon>
        <taxon>Longamoebia</taxon>
        <taxon>Centramoebida</taxon>
        <taxon>Acanthamoebidae</taxon>
        <taxon>Acanthamoeba</taxon>
    </lineage>
</organism>
<proteinExistence type="inferred from homology"/>
<sequence>MAAQRRRKGGEVESDYIKYLKYKNTGFQVSASDKTLAWWPTKDADRAFCHVEVTKDDGKNFTVRLENGEEKSQPKNEKNFLGVNPPKFDGVEDMGELGYLNEPAVLHNLKKRYDADLFHTYSGLFLVVVNPYKRLPVYTPEIIDIYRGRQRDKVAPHIFAISDAAYRAMLNTRQNQSMLITGESGAGKTENTKKVIQYLTAIAGRAEGGLLEQQLLEFNPILEAFGNAKTTKNNNSSRFGKFIELQFNAGGQITGANTFIYLLEKSRVTAQGAGERNFHIFYQILSKAMPEELKQKLKLTKPEDYFFLNQNACYTVDDMDDAKEFDHMLKAFDILNINEEERLAIFQTISAILHLGNLPFIDVNSETAGLKDEVELNIAAELLGVSAAGLKAGLLSPRIKAGNEWVTRALNKPKAMASRDALCKALFGRLFLWIVQKINRILSHKDKTALWIGVLDISGFEIFQHNSFEQLCINYTNEKLQQFFNHHMFTLEQQEYEREKIDWTFVDYGMDSQDCIDLIEKKPMGILPLLDEQTVFPDADDTSFTKKLFQTHENHRNFRRPRFDANNFKIVHYAGEVEYQTSAWLEKNRDPLEDDLSNLCKKSSVRFVTGLFDEDLMPSFKAAPAEEEKAAAGGSRNRSTGRGKGGAQFITVAFQYKEQLAHLMSMLSSTAPHFIRCIIPNLGKKPGVVSDQLVLDQLKCNGVLEGIRIARKGWPNRLKYDEFLKRYFLLKPGATPTSPSTKDAVKDLIEHLIAKEPTKVNKDEVRFGVTKIFFRSGQLAAIEELREQAISKMVVSIQAGARAFLARRMYDKMREQTVSAKILQRNIRAWLELKNWAWYQLYVKARPLISQRNFQKEIDDLKKQVKDLEKELAALKDANAKLDKEKQLAEEDADKLEKDLAALKLKILDLEGEKADLEEDNALLQKKVAGLEEELQEETSASNDILEQKRKLEAEKGELKASLEEEERNRKALQEAKTKVESERNELQDKYEDEAAAHDSLKKKEEDLSRELRETKDALADAENISETLRSKLKNTERGADDVRNELDDVTATKLQLEKTKKSLEEELAQTRAQLEEEKSGKEAASSKAKQLGQQLEDARSEVDSLKSKLSAAEKSLKTAKDQNRDLDEQLEDERTVRANVDKQKKALEAKLTELEDQVTALDGQKNAAAAQAKTLKTQVDETKRRLEEAEASAARLEKERKNALDEVAQLTADLDAERDSGAQQRRKLNTRISELQSELENAPKTGGASSEEVKRLEGELERLEEELLTAQEARAAAEKNLDKANLELEELRQEADDAARDNDKLVKDNRKLKADLDEARIQLEEEQDAKSHADSSSRRLLAEIEELKKRVAKETSDKQKAQDQKANYQRENESLKADRDSIERRNRDAERQVRDLRAQLDDALSRLDSEKRAKEKSVEANRELKKVVLDRERQSLESLSKFNSALESDKQILEDEIGDLHEKNKQLQAKIAQLQDEIDGTPSSRGGSTRGASARGASVRAGSARAEE</sequence>
<feature type="chain" id="PRO_0000123364" description="Myosin-2 heavy chain, non muscle">
    <location>
        <begin position="1"/>
        <end position="1509"/>
    </location>
</feature>
<feature type="domain" description="Myosin N-terminal SH3-like" evidence="5">
    <location>
        <begin position="32"/>
        <end position="85"/>
    </location>
</feature>
<feature type="domain" description="Myosin motor" evidence="4">
    <location>
        <begin position="89"/>
        <end position="787"/>
    </location>
</feature>
<feature type="domain" description="IQ" evidence="3">
    <location>
        <begin position="790"/>
        <end position="819"/>
    </location>
</feature>
<feature type="region of interest" description="Disordered" evidence="6">
    <location>
        <begin position="623"/>
        <end position="643"/>
    </location>
</feature>
<feature type="region of interest" description="Actin-binding">
    <location>
        <begin position="660"/>
        <end position="682"/>
    </location>
</feature>
<feature type="region of interest" description="Actin-binding">
    <location>
        <begin position="766"/>
        <end position="780"/>
    </location>
</feature>
<feature type="region of interest" description="Alpha-helical tailpiece (S2)">
    <location>
        <begin position="848"/>
        <end position="1226"/>
    </location>
</feature>
<feature type="region of interest" description="Disordered" evidence="6">
    <location>
        <begin position="958"/>
        <end position="1049"/>
    </location>
</feature>
<feature type="region of interest" description="Disordered" evidence="6">
    <location>
        <begin position="1068"/>
        <end position="1141"/>
    </location>
</feature>
<feature type="region of interest" description="Disordered" evidence="6">
    <location>
        <begin position="1170"/>
        <end position="1195"/>
    </location>
</feature>
<feature type="region of interest" description="Disordered" evidence="6">
    <location>
        <begin position="1213"/>
        <end position="1259"/>
    </location>
</feature>
<feature type="region of interest" description="Hinge">
    <location>
        <begin position="1227"/>
        <end position="1252"/>
    </location>
</feature>
<feature type="region of interest" description="Light meromyosin (LMM)">
    <location>
        <begin position="1253"/>
        <end position="1509"/>
    </location>
</feature>
<feature type="region of interest" description="Alpha-helical tailpiece (LMM)">
    <location>
        <begin position="1253"/>
        <end position="1482"/>
    </location>
</feature>
<feature type="region of interest" description="Disordered" evidence="6">
    <location>
        <begin position="1352"/>
        <end position="1425"/>
    </location>
</feature>
<feature type="region of interest" description="Disordered" evidence="6">
    <location>
        <begin position="1474"/>
        <end position="1509"/>
    </location>
</feature>
<feature type="region of interest" description="Nonhelical tailpiece">
    <location>
        <begin position="1483"/>
        <end position="1509"/>
    </location>
</feature>
<feature type="coiled-coil region" evidence="2">
    <location>
        <begin position="848"/>
        <end position="1509"/>
    </location>
</feature>
<feature type="compositionally biased region" description="Basic and acidic residues" evidence="6">
    <location>
        <begin position="958"/>
        <end position="1019"/>
    </location>
</feature>
<feature type="compositionally biased region" description="Basic and acidic residues" evidence="6">
    <location>
        <begin position="1034"/>
        <end position="1047"/>
    </location>
</feature>
<feature type="compositionally biased region" description="Basic and acidic residues" evidence="6">
    <location>
        <begin position="1097"/>
        <end position="1107"/>
    </location>
</feature>
<feature type="compositionally biased region" description="Basic and acidic residues" evidence="6">
    <location>
        <begin position="1115"/>
        <end position="1141"/>
    </location>
</feature>
<feature type="compositionally biased region" description="Basic and acidic residues" evidence="6">
    <location>
        <begin position="1179"/>
        <end position="1189"/>
    </location>
</feature>
<feature type="compositionally biased region" description="Polar residues" evidence="6">
    <location>
        <begin position="1231"/>
        <end position="1240"/>
    </location>
</feature>
<feature type="compositionally biased region" description="Low complexity" evidence="6">
    <location>
        <begin position="1484"/>
        <end position="1509"/>
    </location>
</feature>
<feature type="binding site">
    <location>
        <begin position="182"/>
        <end position="189"/>
    </location>
    <ligand>
        <name>ATP</name>
        <dbReference type="ChEBI" id="CHEBI:30616"/>
    </ligand>
</feature>
<feature type="modified residue" description="N6,N6,N6-trimethyllysine" evidence="2">
    <location>
        <position position="133"/>
    </location>
</feature>
<feature type="modified residue" description="Phosphoserine" evidence="1">
    <location>
        <position position="1489"/>
    </location>
</feature>
<feature type="modified residue" description="Phosphoserine" evidence="1">
    <location>
        <position position="1494"/>
    </location>
</feature>
<feature type="modified residue" description="Phosphoserine" evidence="1">
    <location>
        <position position="1499"/>
    </location>
</feature>
<protein>
    <recommendedName>
        <fullName>Myosin-2 heavy chain, non muscle</fullName>
    </recommendedName>
    <alternativeName>
        <fullName>Myosin II heavy chain, non muscle</fullName>
    </alternativeName>
</protein>
<keyword id="KW-0009">Actin-binding</keyword>
<keyword id="KW-0067">ATP-binding</keyword>
<keyword id="KW-0112">Calmodulin-binding</keyword>
<keyword id="KW-0175">Coiled coil</keyword>
<keyword id="KW-0488">Methylation</keyword>
<keyword id="KW-0505">Motor protein</keyword>
<keyword id="KW-0518">Myosin</keyword>
<keyword id="KW-0547">Nucleotide-binding</keyword>
<keyword id="KW-0597">Phosphoprotein</keyword>
<accession>P05659</accession>
<reference key="1">
    <citation type="journal article" date="1987" name="J. Cell Biol.">
        <title>Complete nucleotide sequence and deduced polypeptide sequence of a nonmuscle myosin heavy chain gene from Acanthamoeba: evidence of a hinge in the rodlike tail.</title>
        <authorList>
            <person name="Hammer J.A. III"/>
            <person name="Bowers B."/>
            <person name="Paterson B.M."/>
            <person name="Korn E.D."/>
        </authorList>
    </citation>
    <scope>NUCLEOTIDE SEQUENCE [GENOMIC DNA]</scope>
</reference>